<keyword id="KW-1185">Reference proteome</keyword>
<reference key="1">
    <citation type="submission" date="1989-03" db="EMBL/GenBank/DDBJ databases">
        <authorList>
            <person name="Neumann H."/>
        </authorList>
    </citation>
    <scope>NUCLEOTIDE SEQUENCE [GENOMIC DNA]</scope>
</reference>
<accession>P19278</accession>
<dbReference type="EMBL" id="X14855">
    <property type="protein sequence ID" value="CAA32971.1"/>
    <property type="molecule type" value="Genomic_DNA"/>
</dbReference>
<dbReference type="Proteomes" id="UP000009250">
    <property type="component" value="Genome"/>
</dbReference>
<proteinExistence type="predicted"/>
<feature type="chain" id="PRO_0000222960" description="Uncharacterized 6.9 kDa protein">
    <location>
        <begin position="1"/>
        <end position="57"/>
    </location>
</feature>
<sequence length="57" mass="6914">MHIIGPVSFSRTVFLDFYNYLLQSGLYETLRIDRKYIEYTLKNKYATLRLYGKYVHT</sequence>
<organism>
    <name type="scientific">Thermoproteus tenax virus 1 (strain KRA1)</name>
    <name type="common">TTV1</name>
    <dbReference type="NCBI Taxonomy" id="10480"/>
    <lineage>
        <taxon>Viruses</taxon>
        <taxon>Adnaviria</taxon>
        <taxon>Zilligvirae</taxon>
        <taxon>Taleaviricota</taxon>
        <taxon>Tokiviricetes</taxon>
        <taxon>Primavirales</taxon>
        <taxon>Tristromaviridae</taxon>
        <taxon>Betatristromavirus</taxon>
        <taxon>Betatristromavirus TTV1</taxon>
    </lineage>
</organism>
<protein>
    <recommendedName>
        <fullName>Uncharacterized 6.9 kDa protein</fullName>
    </recommendedName>
</protein>
<name>YOR3_TTV1K</name>
<organismHost>
    <name type="scientific">Thermoproteus tenax</name>
    <dbReference type="NCBI Taxonomy" id="2271"/>
</organismHost>